<comment type="function">
    <text evidence="1">Involved in the active translocation of vitamin B12 (cyanocobalamin) across the outer membrane to the periplasmic space. It derives its energy for transport by interacting with the trans-periplasmic membrane protein TonB.</text>
</comment>
<comment type="subcellular location">
    <subcellularLocation>
        <location evidence="1">Cell outer membrane</location>
        <topology evidence="1">Multi-pass membrane protein</topology>
    </subcellularLocation>
</comment>
<comment type="similarity">
    <text evidence="1">Belongs to the TonB-dependent receptor family. BtuB (TC 1.B.14.3.1) subfamily.</text>
</comment>
<accession>Q3YV10</accession>
<dbReference type="EMBL" id="CP000038">
    <property type="protein sequence ID" value="AAZ90652.1"/>
    <property type="molecule type" value="Genomic_DNA"/>
</dbReference>
<dbReference type="RefSeq" id="WP_000591359.1">
    <property type="nucleotide sequence ID" value="NC_007384.1"/>
</dbReference>
<dbReference type="SMR" id="Q3YV10"/>
<dbReference type="GeneID" id="93777927"/>
<dbReference type="KEGG" id="ssn:SSON_4139"/>
<dbReference type="HOGENOM" id="CLU_008287_18_5_6"/>
<dbReference type="Proteomes" id="UP000002529">
    <property type="component" value="Chromosome"/>
</dbReference>
<dbReference type="GO" id="GO:0009279">
    <property type="term" value="C:cell outer membrane"/>
    <property type="evidence" value="ECO:0007669"/>
    <property type="project" value="UniProtKB-SubCell"/>
</dbReference>
<dbReference type="GO" id="GO:0046930">
    <property type="term" value="C:pore complex"/>
    <property type="evidence" value="ECO:0007669"/>
    <property type="project" value="UniProtKB-KW"/>
</dbReference>
<dbReference type="GO" id="GO:0015420">
    <property type="term" value="F:ABC-type vitamin B12 transporter activity"/>
    <property type="evidence" value="ECO:0007669"/>
    <property type="project" value="InterPro"/>
</dbReference>
<dbReference type="GO" id="GO:0046872">
    <property type="term" value="F:metal ion binding"/>
    <property type="evidence" value="ECO:0007669"/>
    <property type="project" value="UniProtKB-KW"/>
</dbReference>
<dbReference type="GO" id="GO:0015288">
    <property type="term" value="F:porin activity"/>
    <property type="evidence" value="ECO:0007669"/>
    <property type="project" value="UniProtKB-KW"/>
</dbReference>
<dbReference type="GO" id="GO:0006811">
    <property type="term" value="P:monoatomic ion transport"/>
    <property type="evidence" value="ECO:0007669"/>
    <property type="project" value="UniProtKB-KW"/>
</dbReference>
<dbReference type="CDD" id="cd01347">
    <property type="entry name" value="ligand_gated_channel"/>
    <property type="match status" value="1"/>
</dbReference>
<dbReference type="FunFam" id="2.170.130.10:FF:000002">
    <property type="entry name" value="Vitamin B12 transporter BtuB"/>
    <property type="match status" value="1"/>
</dbReference>
<dbReference type="FunFam" id="2.40.170.20:FF:000001">
    <property type="entry name" value="Vitamin B12 transporter BtuB"/>
    <property type="match status" value="1"/>
</dbReference>
<dbReference type="Gene3D" id="2.40.170.20">
    <property type="entry name" value="TonB-dependent receptor, beta-barrel domain"/>
    <property type="match status" value="1"/>
</dbReference>
<dbReference type="Gene3D" id="2.170.130.10">
    <property type="entry name" value="TonB-dependent receptor, plug domain"/>
    <property type="match status" value="1"/>
</dbReference>
<dbReference type="HAMAP" id="MF_01531">
    <property type="entry name" value="BtuB"/>
    <property type="match status" value="1"/>
</dbReference>
<dbReference type="InterPro" id="IPR010101">
    <property type="entry name" value="B12_transptr_BtuB"/>
</dbReference>
<dbReference type="InterPro" id="IPR012910">
    <property type="entry name" value="Plug_dom"/>
</dbReference>
<dbReference type="InterPro" id="IPR037066">
    <property type="entry name" value="Plug_dom_sf"/>
</dbReference>
<dbReference type="InterPro" id="IPR039426">
    <property type="entry name" value="TonB-dep_rcpt-like"/>
</dbReference>
<dbReference type="InterPro" id="IPR000531">
    <property type="entry name" value="TonB-dep_rcpt_b-brl"/>
</dbReference>
<dbReference type="InterPro" id="IPR010916">
    <property type="entry name" value="TonB_box_CS"/>
</dbReference>
<dbReference type="InterPro" id="IPR036942">
    <property type="entry name" value="TonB_rcpt_b-brl_sf"/>
</dbReference>
<dbReference type="InterPro" id="IPR010917">
    <property type="entry name" value="TonB_rcpt_CS"/>
</dbReference>
<dbReference type="NCBIfam" id="NF007926">
    <property type="entry name" value="PRK10641.1"/>
    <property type="match status" value="1"/>
</dbReference>
<dbReference type="NCBIfam" id="TIGR01779">
    <property type="entry name" value="TonB-B12"/>
    <property type="match status" value="1"/>
</dbReference>
<dbReference type="PANTHER" id="PTHR30069:SF53">
    <property type="entry name" value="COLICIN I RECEPTOR-RELATED"/>
    <property type="match status" value="1"/>
</dbReference>
<dbReference type="PANTHER" id="PTHR30069">
    <property type="entry name" value="TONB-DEPENDENT OUTER MEMBRANE RECEPTOR"/>
    <property type="match status" value="1"/>
</dbReference>
<dbReference type="Pfam" id="PF07715">
    <property type="entry name" value="Plug"/>
    <property type="match status" value="1"/>
</dbReference>
<dbReference type="Pfam" id="PF00593">
    <property type="entry name" value="TonB_dep_Rec_b-barrel"/>
    <property type="match status" value="1"/>
</dbReference>
<dbReference type="SUPFAM" id="SSF56935">
    <property type="entry name" value="Porins"/>
    <property type="match status" value="1"/>
</dbReference>
<dbReference type="PROSITE" id="PS00430">
    <property type="entry name" value="TONB_DEPENDENT_REC_1"/>
    <property type="match status" value="1"/>
</dbReference>
<dbReference type="PROSITE" id="PS01156">
    <property type="entry name" value="TONB_DEPENDENT_REC_2"/>
    <property type="match status" value="1"/>
</dbReference>
<dbReference type="PROSITE" id="PS52016">
    <property type="entry name" value="TONB_DEPENDENT_REC_3"/>
    <property type="match status" value="1"/>
</dbReference>
<reference key="1">
    <citation type="journal article" date="2005" name="Nucleic Acids Res.">
        <title>Genome dynamics and diversity of Shigella species, the etiologic agents of bacillary dysentery.</title>
        <authorList>
            <person name="Yang F."/>
            <person name="Yang J."/>
            <person name="Zhang X."/>
            <person name="Chen L."/>
            <person name="Jiang Y."/>
            <person name="Yan Y."/>
            <person name="Tang X."/>
            <person name="Wang J."/>
            <person name="Xiong Z."/>
            <person name="Dong J."/>
            <person name="Xue Y."/>
            <person name="Zhu Y."/>
            <person name="Xu X."/>
            <person name="Sun L."/>
            <person name="Chen S."/>
            <person name="Nie H."/>
            <person name="Peng J."/>
            <person name="Xu J."/>
            <person name="Wang Y."/>
            <person name="Yuan Z."/>
            <person name="Wen Y."/>
            <person name="Yao Z."/>
            <person name="Shen Y."/>
            <person name="Qiang B."/>
            <person name="Hou Y."/>
            <person name="Yu J."/>
            <person name="Jin Q."/>
        </authorList>
    </citation>
    <scope>NUCLEOTIDE SEQUENCE [LARGE SCALE GENOMIC DNA]</scope>
    <source>
        <strain>Ss046</strain>
    </source>
</reference>
<feature type="signal peptide" evidence="1">
    <location>
        <begin position="1"/>
        <end position="20"/>
    </location>
</feature>
<feature type="chain" id="PRO_0000292762" description="Vitamin B12 transporter BtuB">
    <location>
        <begin position="21"/>
        <end position="614"/>
    </location>
</feature>
<feature type="transmembrane region" description="Beta stranded" evidence="1">
    <location>
        <begin position="158"/>
        <end position="165"/>
    </location>
</feature>
<feature type="transmembrane region" description="Beta stranded" evidence="1">
    <location>
        <begin position="169"/>
        <end position="178"/>
    </location>
</feature>
<feature type="transmembrane region" description="Beta stranded" evidence="1">
    <location>
        <begin position="184"/>
        <end position="195"/>
    </location>
</feature>
<feature type="transmembrane region" description="Beta stranded" evidence="1">
    <location>
        <begin position="217"/>
        <end position="227"/>
    </location>
</feature>
<feature type="transmembrane region" description="Beta stranded" evidence="1">
    <location>
        <begin position="232"/>
        <end position="248"/>
    </location>
</feature>
<feature type="transmembrane region" description="Beta stranded" evidence="1">
    <location>
        <begin position="263"/>
        <end position="277"/>
    </location>
</feature>
<feature type="transmembrane region" description="Beta stranded" evidence="1">
    <location>
        <begin position="279"/>
        <end position="296"/>
    </location>
</feature>
<feature type="transmembrane region" description="Beta stranded" evidence="1">
    <location>
        <begin position="309"/>
        <end position="325"/>
    </location>
</feature>
<feature type="transmembrane region" description="Beta stranded" evidence="1">
    <location>
        <begin position="328"/>
        <end position="337"/>
    </location>
</feature>
<feature type="transmembrane region" description="Beta stranded" evidence="1">
    <location>
        <begin position="353"/>
        <end position="369"/>
    </location>
</feature>
<feature type="transmembrane region" description="Beta stranded" evidence="1">
    <location>
        <begin position="371"/>
        <end position="381"/>
    </location>
</feature>
<feature type="transmembrane region" description="Beta stranded" evidence="1">
    <location>
        <begin position="385"/>
        <end position="400"/>
    </location>
</feature>
<feature type="transmembrane region" description="Beta stranded" evidence="1">
    <location>
        <begin position="403"/>
        <end position="417"/>
    </location>
</feature>
<feature type="transmembrane region" description="Beta stranded" evidence="1">
    <location>
        <begin position="434"/>
        <end position="443"/>
    </location>
</feature>
<feature type="transmembrane region" description="Beta stranded" evidence="1">
    <location>
        <begin position="449"/>
        <end position="458"/>
    </location>
</feature>
<feature type="transmembrane region" description="Beta stranded" evidence="1">
    <location>
        <begin position="473"/>
        <end position="490"/>
    </location>
</feature>
<feature type="transmembrane region" description="Beta stranded" evidence="1">
    <location>
        <begin position="494"/>
        <end position="509"/>
    </location>
</feature>
<feature type="transmembrane region" description="Beta stranded" evidence="1">
    <location>
        <begin position="517"/>
        <end position="529"/>
    </location>
</feature>
<feature type="transmembrane region" description="Beta stranded" evidence="1">
    <location>
        <begin position="535"/>
        <end position="550"/>
    </location>
</feature>
<feature type="transmembrane region" description="Beta stranded" evidence="1">
    <location>
        <begin position="558"/>
        <end position="572"/>
    </location>
</feature>
<feature type="transmembrane region" description="Beta stranded" evidence="1">
    <location>
        <begin position="585"/>
        <end position="596"/>
    </location>
</feature>
<feature type="transmembrane region" description="Beta stranded" evidence="1">
    <location>
        <begin position="602"/>
        <end position="614"/>
    </location>
</feature>
<feature type="domain" description="TBDR plug" evidence="2">
    <location>
        <begin position="38"/>
        <end position="152"/>
    </location>
</feature>
<feature type="domain" description="TBDR beta-barrel" evidence="2">
    <location>
        <begin position="155"/>
        <end position="614"/>
    </location>
</feature>
<feature type="short sequence motif" description="TonB box">
    <location>
        <begin position="26"/>
        <end position="33"/>
    </location>
</feature>
<feature type="short sequence motif" description="TonB C-terminal box">
    <location>
        <begin position="597"/>
        <end position="614"/>
    </location>
</feature>
<feature type="binding site" evidence="1">
    <location>
        <position position="83"/>
    </location>
    <ligand>
        <name>cyanocob(III)alamin</name>
        <dbReference type="ChEBI" id="CHEBI:17439"/>
    </ligand>
</feature>
<feature type="binding site" evidence="1">
    <location>
        <position position="85"/>
    </location>
    <ligand>
        <name>cyanocob(III)alamin</name>
        <dbReference type="ChEBI" id="CHEBI:17439"/>
    </ligand>
</feature>
<feature type="binding site" evidence="1">
    <location>
        <position position="92"/>
    </location>
    <ligand>
        <name>cyanocob(III)alamin</name>
        <dbReference type="ChEBI" id="CHEBI:17439"/>
    </ligand>
</feature>
<feature type="binding site" evidence="1">
    <location>
        <begin position="110"/>
        <end position="111"/>
    </location>
    <ligand>
        <name>cyanocob(III)alamin</name>
        <dbReference type="ChEBI" id="CHEBI:17439"/>
    </ligand>
</feature>
<feature type="binding site" evidence="1">
    <location>
        <position position="199"/>
    </location>
    <ligand>
        <name>Ca(2+)</name>
        <dbReference type="ChEBI" id="CHEBI:29108"/>
        <label>1</label>
    </ligand>
</feature>
<feature type="binding site" evidence="1">
    <location>
        <position position="211"/>
    </location>
    <ligand>
        <name>Ca(2+)</name>
        <dbReference type="ChEBI" id="CHEBI:29108"/>
        <label>1</label>
    </ligand>
</feature>
<feature type="binding site" evidence="1">
    <location>
        <position position="213"/>
    </location>
    <ligand>
        <name>Ca(2+)</name>
        <dbReference type="ChEBI" id="CHEBI:29108"/>
        <label>1</label>
    </ligand>
</feature>
<feature type="binding site" evidence="1">
    <location>
        <position position="213"/>
    </location>
    <ligand>
        <name>Ca(2+)</name>
        <dbReference type="ChEBI" id="CHEBI:29108"/>
        <label>2</label>
    </ligand>
</feature>
<feature type="binding site" evidence="1">
    <location>
        <position position="215"/>
    </location>
    <ligand>
        <name>Ca(2+)</name>
        <dbReference type="ChEBI" id="CHEBI:29108"/>
        <label>1</label>
    </ligand>
</feature>
<feature type="binding site" evidence="1">
    <location>
        <position position="215"/>
    </location>
    <ligand>
        <name>Ca(2+)</name>
        <dbReference type="ChEBI" id="CHEBI:29108"/>
        <label>2</label>
    </ligand>
</feature>
<feature type="binding site" evidence="1">
    <location>
        <position position="249"/>
    </location>
    <ligand>
        <name>Ca(2+)</name>
        <dbReference type="ChEBI" id="CHEBI:29108"/>
        <label>2</label>
    </ligand>
</feature>
<feature type="binding site" evidence="1">
    <location>
        <position position="250"/>
    </location>
    <ligand>
        <name>Ca(2+)</name>
        <dbReference type="ChEBI" id="CHEBI:29108"/>
        <label>1</label>
    </ligand>
</feature>
<feature type="binding site" evidence="1">
    <location>
        <position position="250"/>
    </location>
    <ligand>
        <name>Ca(2+)</name>
        <dbReference type="ChEBI" id="CHEBI:29108"/>
        <label>2</label>
    </ligand>
</feature>
<feature type="binding site" evidence="1">
    <location>
        <position position="251"/>
    </location>
    <ligand>
        <name>cyanocob(III)alamin</name>
        <dbReference type="ChEBI" id="CHEBI:17439"/>
    </ligand>
</feature>
<feature type="binding site" evidence="1">
    <location>
        <position position="261"/>
    </location>
    <ligand>
        <name>Ca(2+)</name>
        <dbReference type="ChEBI" id="CHEBI:29108"/>
        <label>2</label>
    </ligand>
</feature>
<feature type="binding site" evidence="1">
    <location>
        <position position="309"/>
    </location>
    <ligand>
        <name>cyanocob(III)alamin</name>
        <dbReference type="ChEBI" id="CHEBI:17439"/>
    </ligand>
</feature>
<feature type="binding site" evidence="1">
    <location>
        <position position="517"/>
    </location>
    <ligand>
        <name>cyanocob(III)alamin</name>
        <dbReference type="ChEBI" id="CHEBI:17439"/>
    </ligand>
</feature>
<feature type="binding site" evidence="1">
    <location>
        <position position="551"/>
    </location>
    <ligand>
        <name>cyanocob(III)alamin</name>
        <dbReference type="ChEBI" id="CHEBI:17439"/>
    </ligand>
</feature>
<keyword id="KW-0106">Calcium</keyword>
<keyword id="KW-0998">Cell outer membrane</keyword>
<keyword id="KW-0406">Ion transport</keyword>
<keyword id="KW-0472">Membrane</keyword>
<keyword id="KW-0479">Metal-binding</keyword>
<keyword id="KW-0626">Porin</keyword>
<keyword id="KW-1185">Reference proteome</keyword>
<keyword id="KW-0732">Signal</keyword>
<keyword id="KW-0798">TonB box</keyword>
<keyword id="KW-0812">Transmembrane</keyword>
<keyword id="KW-1134">Transmembrane beta strand</keyword>
<keyword id="KW-0813">Transport</keyword>
<name>BTUB_SHISS</name>
<gene>
    <name evidence="1" type="primary">btuB</name>
    <name type="ordered locus">SSON_4139</name>
</gene>
<sequence length="614" mass="68407">MIKKASLLTACSVTAFSAWAQDTSPDTLVVTANRFEQPRSTVLAPTTVVTRQDIDRWQSTSVNDVLRRLPGVDITQNGGSGQLSSIFIRGTNASHVLVLIDGVRLNLAGVSGSADLSQFPIALVQRVEYIRGPRSAVYGSDAIGGVVNIITTRDEPGTEISAGWGSNSYQNYDVSTQQQLGDKTRVTLLGDYAHTHGYDVVAYGNTGTQAQTDNDGFLSKTLYGALEHNFTDAWSGFVRGYGYDNRTNYDAYYSPGSPLLDTRKLYSQSWDAGLRYNGELIKSQLITSYSHSKDYNYDPHYGRYDSSATLDEMKQYTVQWANNVIVGHGSIGAGVDWQKQTTTPGTGYVEDGYDQRNTGIYLTGLQQVGDFTFEGAARSDDNSQFGRHGTWQTSAGWEFIEGYRFIASYGTSYKAPNLGQLYGFYGNPNLDPEKSKQWEGAFEGLTAGVNWRISGYRNDVSDLIDYDDHTLKYYNEGKARIKGVEATANFDTGPLTHTVSYDYVDARNAITDTPLLRRAKQQVKYQLDWQLYDFDWGITYQYLGTRYDKDYSSYPYQTVKMGGVSLWDLAVAYPVTSHLTVRGKIANLFDKDYETVYGYQTAGREYTLSGSYTF</sequence>
<proteinExistence type="inferred from homology"/>
<organism>
    <name type="scientific">Shigella sonnei (strain Ss046)</name>
    <dbReference type="NCBI Taxonomy" id="300269"/>
    <lineage>
        <taxon>Bacteria</taxon>
        <taxon>Pseudomonadati</taxon>
        <taxon>Pseudomonadota</taxon>
        <taxon>Gammaproteobacteria</taxon>
        <taxon>Enterobacterales</taxon>
        <taxon>Enterobacteriaceae</taxon>
        <taxon>Shigella</taxon>
    </lineage>
</organism>
<evidence type="ECO:0000255" key="1">
    <source>
        <dbReference type="HAMAP-Rule" id="MF_01531"/>
    </source>
</evidence>
<evidence type="ECO:0000255" key="2">
    <source>
        <dbReference type="PROSITE-ProRule" id="PRU01360"/>
    </source>
</evidence>
<protein>
    <recommendedName>
        <fullName evidence="1">Vitamin B12 transporter BtuB</fullName>
    </recommendedName>
    <alternativeName>
        <fullName evidence="1">Cobalamin receptor</fullName>
    </alternativeName>
    <alternativeName>
        <fullName evidence="1">Outer membrane cobalamin translocator</fullName>
    </alternativeName>
</protein>